<accession>B3P773</accession>
<evidence type="ECO:0000250" key="1">
    <source>
        <dbReference type="UniProtKB" id="Q95RV2"/>
    </source>
</evidence>
<evidence type="ECO:0000255" key="2"/>
<evidence type="ECO:0000256" key="3">
    <source>
        <dbReference type="SAM" id="MobiDB-lite"/>
    </source>
</evidence>
<evidence type="ECO:0000312" key="4">
    <source>
        <dbReference type="EMBL" id="EDV53893.1"/>
    </source>
</evidence>
<comment type="function">
    <text evidence="1">Binds to chromosome ends in a sequence-dependent manner and is required for telomere capping.</text>
</comment>
<comment type="subunit">
    <text evidence="1">Interacts (via C-terminus) with Su(var)205 dimer (via hinge and chromoshadow domain) and with moi to form the terminin, telomere-capping, complex. Interacts with HP6, which is also part of the terminin complex (By similarity).</text>
</comment>
<comment type="subcellular location">
    <subcellularLocation>
        <location evidence="1">Nucleus</location>
    </subcellularLocation>
    <subcellularLocation>
        <location evidence="1">Chromosome</location>
        <location evidence="1">Telomere</location>
    </subcellularLocation>
</comment>
<comment type="miscellaneous">
    <text>Multiple telomeric associations (TAs) in the same metaphase spread often result in multicentric linear chromosomes that resemble little 'trains' of chromosomes, hence the name 'caravaggio', an Italian train.</text>
</comment>
<dbReference type="EMBL" id="CH954182">
    <property type="protein sequence ID" value="EDV53893.1"/>
    <property type="molecule type" value="Genomic_DNA"/>
</dbReference>
<dbReference type="SMR" id="B3P773"/>
<dbReference type="EnsemblMetazoa" id="FBtr0131322">
    <property type="protein sequence ID" value="FBpp0129814"/>
    <property type="gene ID" value="FBgn0103569"/>
</dbReference>
<dbReference type="EnsemblMetazoa" id="XM_001981987.2">
    <property type="protein sequence ID" value="XP_001982023.1"/>
    <property type="gene ID" value="LOC6555107"/>
</dbReference>
<dbReference type="GeneID" id="6555107"/>
<dbReference type="KEGG" id="der:6555107"/>
<dbReference type="eggNOG" id="ENOG502RN8H">
    <property type="taxonomic scope" value="Eukaryota"/>
</dbReference>
<dbReference type="HOGENOM" id="CLU_059636_0_0_1"/>
<dbReference type="OMA" id="QINSESM"/>
<dbReference type="OrthoDB" id="7934455at2759"/>
<dbReference type="PhylomeDB" id="B3P773"/>
<dbReference type="ChiTaRS" id="cav">
    <property type="organism name" value="fly"/>
</dbReference>
<dbReference type="Proteomes" id="UP000008711">
    <property type="component" value="Unassembled WGS sequence"/>
</dbReference>
<dbReference type="GO" id="GO:0000775">
    <property type="term" value="C:chromosome, centromeric region"/>
    <property type="evidence" value="ECO:0007669"/>
    <property type="project" value="EnsemblMetazoa"/>
</dbReference>
<dbReference type="GO" id="GO:0005634">
    <property type="term" value="C:nucleus"/>
    <property type="evidence" value="ECO:0007669"/>
    <property type="project" value="UniProtKB-SubCell"/>
</dbReference>
<dbReference type="GO" id="GO:0000782">
    <property type="term" value="C:telomere cap complex"/>
    <property type="evidence" value="ECO:0000250"/>
    <property type="project" value="UniProtKB"/>
</dbReference>
<dbReference type="GO" id="GO:0042162">
    <property type="term" value="F:telomeric DNA binding"/>
    <property type="evidence" value="ECO:0000250"/>
    <property type="project" value="UniProtKB"/>
</dbReference>
<dbReference type="GO" id="GO:0016233">
    <property type="term" value="P:telomere capping"/>
    <property type="evidence" value="ECO:0000250"/>
    <property type="project" value="UniProtKB"/>
</dbReference>
<protein>
    <recommendedName>
        <fullName evidence="1">Telomere-binding protein cav</fullName>
    </recommendedName>
    <alternativeName>
        <fullName>Protein caravaggio</fullName>
    </alternativeName>
</protein>
<organism>
    <name type="scientific">Drosophila erecta</name>
    <name type="common">Fruit fly</name>
    <dbReference type="NCBI Taxonomy" id="7220"/>
    <lineage>
        <taxon>Eukaryota</taxon>
        <taxon>Metazoa</taxon>
        <taxon>Ecdysozoa</taxon>
        <taxon>Arthropoda</taxon>
        <taxon>Hexapoda</taxon>
        <taxon>Insecta</taxon>
        <taxon>Pterygota</taxon>
        <taxon>Neoptera</taxon>
        <taxon>Endopterygota</taxon>
        <taxon>Diptera</taxon>
        <taxon>Brachycera</taxon>
        <taxon>Muscomorpha</taxon>
        <taxon>Ephydroidea</taxon>
        <taxon>Drosophilidae</taxon>
        <taxon>Drosophila</taxon>
        <taxon>Sophophora</taxon>
    </lineage>
</organism>
<proteinExistence type="inferred from homology"/>
<gene>
    <name evidence="1" type="primary">cav</name>
    <name type="ORF">GG11268</name>
</gene>
<feature type="chain" id="PRO_0000379488" description="Telomere-binding protein cav">
    <location>
        <begin position="1"/>
        <end position="328"/>
    </location>
</feature>
<feature type="region of interest" description="Required for binding to Su(var)205" evidence="1">
    <location>
        <begin position="107"/>
        <end position="320"/>
    </location>
</feature>
<feature type="region of interest" description="Disordered" evidence="3">
    <location>
        <begin position="139"/>
        <end position="228"/>
    </location>
</feature>
<feature type="region of interest" description="Disordered" evidence="3">
    <location>
        <begin position="295"/>
        <end position="328"/>
    </location>
</feature>
<feature type="short sequence motif" description="Su(var)205-binding Pro-containing repeat 1" evidence="2">
    <location>
        <begin position="228"/>
        <end position="232"/>
    </location>
</feature>
<feature type="short sequence motif" description="Su(var)205-binding Pro-containing repeat 2" evidence="2">
    <location>
        <begin position="281"/>
        <end position="287"/>
    </location>
</feature>
<feature type="compositionally biased region" description="Polar residues" evidence="3">
    <location>
        <begin position="144"/>
        <end position="167"/>
    </location>
</feature>
<feature type="compositionally biased region" description="Polar residues" evidence="3">
    <location>
        <begin position="180"/>
        <end position="189"/>
    </location>
</feature>
<feature type="compositionally biased region" description="Polar residues" evidence="3">
    <location>
        <begin position="295"/>
        <end position="319"/>
    </location>
</feature>
<reference evidence="4" key="1">
    <citation type="journal article" date="2007" name="Nature">
        <title>Evolution of genes and genomes on the Drosophila phylogeny.</title>
        <authorList>
            <consortium name="Drosophila 12 genomes consortium"/>
        </authorList>
    </citation>
    <scope>NUCLEOTIDE SEQUENCE [LARGE SCALE GENOMIC DNA]</scope>
    <source>
        <strain evidence="4">Tucson 14021-0224.01</strain>
    </source>
</reference>
<name>CAV_DROER</name>
<sequence>MSDTQISSFLRKYLADEDRKIRAQFKESDPKNKLILWMHEKTRITEDDLKRPYTKDEVRELCLRTKVKVDMTAWNCLWEAKKRFDAKGRFENKSEKFINRMYMKAVRRKMVQPYPEEYVAQRREVIAAETKKFNISRLDRWQKQKSQNRSAPESSSALVGHASQQDSQDNEAVETHEDQANTNRYSVSQMEPMARPVVSASDLSGIGDDEDEQQQQQSEFQTEHTDCPETQMRCDQINSGSLPMGLTNSESAPDYYMFGTQLSTSVRPTSTQEADDQIACPETETNESWVRCDQINSESMSIGPSIDSEGNISLQNSGSEPIDVDSMA</sequence>
<keyword id="KW-0158">Chromosome</keyword>
<keyword id="KW-0238">DNA-binding</keyword>
<keyword id="KW-0539">Nucleus</keyword>
<keyword id="KW-0677">Repeat</keyword>
<keyword id="KW-0779">Telomere</keyword>